<comment type="function">
    <text evidence="2">Potent selective inhibitor of high conductance (maxi-K), different medium and small conductance calcium-activated potassium channels (KCa1.1/KCNMA1 and others), as well as a voltage-dependent potassium channel (Kv1.3/KCNA3&gt;Kv1.2/KCNA2&gt;Kv1.6/KCNA3&gt;&gt;Shaker/Sh). It blocks channel activity by a simple bimolecular inhibition process.</text>
</comment>
<comment type="function">
    <text evidence="2">Has a pH-specific antimicrobial activity against bacteria (B.subtilis, E.coli and S.aureus) and the fungus C.albicans.</text>
</comment>
<comment type="subcellular location">
    <subcellularLocation>
        <location evidence="2">Secreted</location>
    </subcellularLocation>
</comment>
<comment type="tissue specificity">
    <text evidence="5">Expressed by the venom gland.</text>
</comment>
<comment type="domain">
    <text evidence="2">Has the structural arrangement of an alpha-helix connected to a beta-sheet by disulfide bonds (CSalpha/beta).</text>
</comment>
<comment type="similarity">
    <text evidence="5">Belongs to the short scorpion toxin superfamily. Potassium channel inhibitor family. Alpha-KTx 01 subfamily.</text>
</comment>
<organism>
    <name type="scientific">Leiurus hebraeus</name>
    <name type="common">Hebrew deathstalker scorpion</name>
    <name type="synonym">Leiurus quinquestriatus hebraeus</name>
    <dbReference type="NCBI Taxonomy" id="2899558"/>
    <lineage>
        <taxon>Eukaryota</taxon>
        <taxon>Metazoa</taxon>
        <taxon>Ecdysozoa</taxon>
        <taxon>Arthropoda</taxon>
        <taxon>Chelicerata</taxon>
        <taxon>Arachnida</taxon>
        <taxon>Scorpiones</taxon>
        <taxon>Buthida</taxon>
        <taxon>Buthoidea</taxon>
        <taxon>Buthidae</taxon>
        <taxon>Leiurus</taxon>
    </lineage>
</organism>
<protein>
    <recommendedName>
        <fullName>Potassium channel toxin alpha-KTx 1.12</fullName>
    </recommendedName>
    <alternativeName>
        <fullName evidence="4">Charybdotoxin b</fullName>
        <shortName evidence="4">ChTx-b</shortName>
    </alternativeName>
</protein>
<sequence>MKILSVLLLALIICSIVGWSEAQFTDVSCTTSKECWSVCQRLHNTSIGKCMNKKCRCYS</sequence>
<evidence type="ECO:0000250" key="1"/>
<evidence type="ECO:0000250" key="2">
    <source>
        <dbReference type="UniProtKB" id="P13487"/>
    </source>
</evidence>
<evidence type="ECO:0000255" key="3"/>
<evidence type="ECO:0000303" key="4">
    <source>
    </source>
</evidence>
<evidence type="ECO:0000305" key="5"/>
<name>KAX1C_LEIHE</name>
<keyword id="KW-0044">Antibiotic</keyword>
<keyword id="KW-0929">Antimicrobial</keyword>
<keyword id="KW-1221">Calcium-activated potassium channel impairing toxin</keyword>
<keyword id="KW-1015">Disulfide bond</keyword>
<keyword id="KW-0295">Fungicide</keyword>
<keyword id="KW-0872">Ion channel impairing toxin</keyword>
<keyword id="KW-0528">Neurotoxin</keyword>
<keyword id="KW-0632">Potassium channel impairing toxin</keyword>
<keyword id="KW-0873">Pyrrolidone carboxylic acid</keyword>
<keyword id="KW-0964">Secreted</keyword>
<keyword id="KW-0732">Signal</keyword>
<keyword id="KW-0800">Toxin</keyword>
<keyword id="KW-1220">Voltage-gated potassium channel impairing toxin</keyword>
<accession>P59943</accession>
<proteinExistence type="inferred from homology"/>
<reference key="1">
    <citation type="journal article" date="1999" name="J. Mol. Evol.">
        <title>Dynamic diversification from a putative common ancestor of scorpion toxins affecting sodium, potassium, and chloride channels.</title>
        <authorList>
            <person name="Froy O."/>
            <person name="Sagiv T."/>
            <person name="Poreh M."/>
            <person name="Urbach D."/>
            <person name="Zilberberg N."/>
            <person name="Gurevitz M."/>
        </authorList>
    </citation>
    <scope>NUCLEOTIDE SEQUENCE [GENOMIC DNA]</scope>
    <source>
        <tissue>Single abdominal segment</tissue>
    </source>
</reference>
<dbReference type="SMR" id="P59943"/>
<dbReference type="GO" id="GO:0005576">
    <property type="term" value="C:extracellular region"/>
    <property type="evidence" value="ECO:0007669"/>
    <property type="project" value="UniProtKB-SubCell"/>
</dbReference>
<dbReference type="GO" id="GO:0008200">
    <property type="term" value="F:ion channel inhibitor activity"/>
    <property type="evidence" value="ECO:0007669"/>
    <property type="project" value="InterPro"/>
</dbReference>
<dbReference type="GO" id="GO:0015459">
    <property type="term" value="F:potassium channel regulator activity"/>
    <property type="evidence" value="ECO:0007669"/>
    <property type="project" value="UniProtKB-KW"/>
</dbReference>
<dbReference type="GO" id="GO:0090729">
    <property type="term" value="F:toxin activity"/>
    <property type="evidence" value="ECO:0007669"/>
    <property type="project" value="UniProtKB-KW"/>
</dbReference>
<dbReference type="GO" id="GO:0042742">
    <property type="term" value="P:defense response to bacterium"/>
    <property type="evidence" value="ECO:0007669"/>
    <property type="project" value="UniProtKB-KW"/>
</dbReference>
<dbReference type="GO" id="GO:0050832">
    <property type="term" value="P:defense response to fungus"/>
    <property type="evidence" value="ECO:0007669"/>
    <property type="project" value="UniProtKB-KW"/>
</dbReference>
<dbReference type="GO" id="GO:0031640">
    <property type="term" value="P:killing of cells of another organism"/>
    <property type="evidence" value="ECO:0007669"/>
    <property type="project" value="UniProtKB-KW"/>
</dbReference>
<dbReference type="Gene3D" id="3.30.30.10">
    <property type="entry name" value="Knottin, scorpion toxin-like"/>
    <property type="match status" value="1"/>
</dbReference>
<dbReference type="InterPro" id="IPR036574">
    <property type="entry name" value="Scorpion_toxin-like_sf"/>
</dbReference>
<dbReference type="InterPro" id="IPR001947">
    <property type="entry name" value="Scorpion_toxinS_K_inh"/>
</dbReference>
<dbReference type="Pfam" id="PF00451">
    <property type="entry name" value="Toxin_2"/>
    <property type="match status" value="1"/>
</dbReference>
<dbReference type="PRINTS" id="PR00286">
    <property type="entry name" value="CHARYBDTOXIN"/>
</dbReference>
<dbReference type="SUPFAM" id="SSF57095">
    <property type="entry name" value="Scorpion toxin-like"/>
    <property type="match status" value="1"/>
</dbReference>
<dbReference type="PROSITE" id="PS01138">
    <property type="entry name" value="SCORP_SHORT_TOXIN"/>
    <property type="match status" value="1"/>
</dbReference>
<feature type="signal peptide" evidence="2">
    <location>
        <begin position="1"/>
        <end position="22"/>
    </location>
</feature>
<feature type="chain" id="PRO_0000035308" description="Potassium channel toxin alpha-KTx 1.12">
    <location>
        <begin position="23"/>
        <end position="59"/>
    </location>
</feature>
<feature type="region of interest" description="Interaction with Ca(2+)-activated K(+) channels" evidence="3">
    <location>
        <begin position="48"/>
        <end position="55"/>
    </location>
</feature>
<feature type="site" description="Basic residue of the functional dyad" evidence="1">
    <location>
        <position position="49"/>
    </location>
</feature>
<feature type="site" description="Aromatic residue of the functional dyad" evidence="1">
    <location>
        <position position="58"/>
    </location>
</feature>
<feature type="modified residue" description="Pyrrolidone carboxylic acid" evidence="2">
    <location>
        <position position="23"/>
    </location>
</feature>
<feature type="disulfide bond" evidence="2">
    <location>
        <begin position="29"/>
        <end position="50"/>
    </location>
</feature>
<feature type="disulfide bond" evidence="2">
    <location>
        <begin position="35"/>
        <end position="55"/>
    </location>
</feature>
<feature type="disulfide bond" evidence="2">
    <location>
        <begin position="39"/>
        <end position="57"/>
    </location>
</feature>